<proteinExistence type="inferred from homology"/>
<dbReference type="EC" id="1.1.1.25" evidence="1"/>
<dbReference type="EMBL" id="CP000084">
    <property type="protein sequence ID" value="AAZ21164.1"/>
    <property type="molecule type" value="Genomic_DNA"/>
</dbReference>
<dbReference type="RefSeq" id="WP_006997566.1">
    <property type="nucleotide sequence ID" value="NC_007205.1"/>
</dbReference>
<dbReference type="SMR" id="Q4FNS5"/>
<dbReference type="STRING" id="335992.SAR11_0341"/>
<dbReference type="GeneID" id="66294840"/>
<dbReference type="KEGG" id="pub:SAR11_0341"/>
<dbReference type="eggNOG" id="COG0169">
    <property type="taxonomic scope" value="Bacteria"/>
</dbReference>
<dbReference type="HOGENOM" id="CLU_044063_2_1_5"/>
<dbReference type="OrthoDB" id="9792692at2"/>
<dbReference type="UniPathway" id="UPA00053">
    <property type="reaction ID" value="UER00087"/>
</dbReference>
<dbReference type="Proteomes" id="UP000002528">
    <property type="component" value="Chromosome"/>
</dbReference>
<dbReference type="GO" id="GO:0005829">
    <property type="term" value="C:cytosol"/>
    <property type="evidence" value="ECO:0007669"/>
    <property type="project" value="TreeGrafter"/>
</dbReference>
<dbReference type="GO" id="GO:0050661">
    <property type="term" value="F:NADP binding"/>
    <property type="evidence" value="ECO:0007669"/>
    <property type="project" value="InterPro"/>
</dbReference>
<dbReference type="GO" id="GO:0004764">
    <property type="term" value="F:shikimate 3-dehydrogenase (NADP+) activity"/>
    <property type="evidence" value="ECO:0007669"/>
    <property type="project" value="UniProtKB-UniRule"/>
</dbReference>
<dbReference type="GO" id="GO:0008652">
    <property type="term" value="P:amino acid biosynthetic process"/>
    <property type="evidence" value="ECO:0007669"/>
    <property type="project" value="UniProtKB-KW"/>
</dbReference>
<dbReference type="GO" id="GO:0009073">
    <property type="term" value="P:aromatic amino acid family biosynthetic process"/>
    <property type="evidence" value="ECO:0007669"/>
    <property type="project" value="UniProtKB-KW"/>
</dbReference>
<dbReference type="GO" id="GO:0009423">
    <property type="term" value="P:chorismate biosynthetic process"/>
    <property type="evidence" value="ECO:0007669"/>
    <property type="project" value="UniProtKB-UniRule"/>
</dbReference>
<dbReference type="GO" id="GO:0019632">
    <property type="term" value="P:shikimate metabolic process"/>
    <property type="evidence" value="ECO:0007669"/>
    <property type="project" value="InterPro"/>
</dbReference>
<dbReference type="CDD" id="cd01065">
    <property type="entry name" value="NAD_bind_Shikimate_DH"/>
    <property type="match status" value="1"/>
</dbReference>
<dbReference type="Gene3D" id="3.40.50.10860">
    <property type="entry name" value="Leucine Dehydrogenase, chain A, domain 1"/>
    <property type="match status" value="1"/>
</dbReference>
<dbReference type="Gene3D" id="3.40.50.720">
    <property type="entry name" value="NAD(P)-binding Rossmann-like Domain"/>
    <property type="match status" value="1"/>
</dbReference>
<dbReference type="HAMAP" id="MF_00222">
    <property type="entry name" value="Shikimate_DH_AroE"/>
    <property type="match status" value="1"/>
</dbReference>
<dbReference type="InterPro" id="IPR046346">
    <property type="entry name" value="Aminoacid_DH-like_N_sf"/>
</dbReference>
<dbReference type="InterPro" id="IPR036291">
    <property type="entry name" value="NAD(P)-bd_dom_sf"/>
</dbReference>
<dbReference type="InterPro" id="IPR011342">
    <property type="entry name" value="Shikimate_DH"/>
</dbReference>
<dbReference type="InterPro" id="IPR013708">
    <property type="entry name" value="Shikimate_DH-bd_N"/>
</dbReference>
<dbReference type="InterPro" id="IPR022893">
    <property type="entry name" value="Shikimate_DH_fam"/>
</dbReference>
<dbReference type="InterPro" id="IPR006151">
    <property type="entry name" value="Shikm_DH/Glu-tRNA_Rdtase"/>
</dbReference>
<dbReference type="NCBIfam" id="TIGR00507">
    <property type="entry name" value="aroE"/>
    <property type="match status" value="1"/>
</dbReference>
<dbReference type="PANTHER" id="PTHR21089:SF1">
    <property type="entry name" value="BIFUNCTIONAL 3-DEHYDROQUINATE DEHYDRATASE_SHIKIMATE DEHYDROGENASE, CHLOROPLASTIC"/>
    <property type="match status" value="1"/>
</dbReference>
<dbReference type="PANTHER" id="PTHR21089">
    <property type="entry name" value="SHIKIMATE DEHYDROGENASE"/>
    <property type="match status" value="1"/>
</dbReference>
<dbReference type="Pfam" id="PF01488">
    <property type="entry name" value="Shikimate_DH"/>
    <property type="match status" value="1"/>
</dbReference>
<dbReference type="Pfam" id="PF08501">
    <property type="entry name" value="Shikimate_dh_N"/>
    <property type="match status" value="1"/>
</dbReference>
<dbReference type="SUPFAM" id="SSF53223">
    <property type="entry name" value="Aminoacid dehydrogenase-like, N-terminal domain"/>
    <property type="match status" value="1"/>
</dbReference>
<dbReference type="SUPFAM" id="SSF51735">
    <property type="entry name" value="NAD(P)-binding Rossmann-fold domains"/>
    <property type="match status" value="1"/>
</dbReference>
<accession>Q4FNS5</accession>
<keyword id="KW-0028">Amino-acid biosynthesis</keyword>
<keyword id="KW-0057">Aromatic amino acid biosynthesis</keyword>
<keyword id="KW-0521">NADP</keyword>
<keyword id="KW-0560">Oxidoreductase</keyword>
<keyword id="KW-1185">Reference proteome</keyword>
<evidence type="ECO:0000255" key="1">
    <source>
        <dbReference type="HAMAP-Rule" id="MF_00222"/>
    </source>
</evidence>
<sequence>MKKTFLVIGNPIKHSLSPKLHNYWIKKYKINATYEKNLLDHSEIEDLIFNIRKEKIHGLNITVPFKKMIIPFLDELSEEAEISQSVNTIYKRDNKIIGDNTDIEGFKLSLEKTEQNVKNKKALILGAGGVVSSIIIALKKIQIEKIYLSNRTELKAIELKKHFPEIEIIKWGETIDFDMIINATSIGLKEEDEININYQKISKDKFFYDVIYNPPETNFLKNAKKYGGITKNGKMMFIYQAQKAFFIWHKIVPEVDSETINLLDV</sequence>
<reference key="1">
    <citation type="journal article" date="2005" name="Science">
        <title>Genome streamlining in a cosmopolitan oceanic bacterium.</title>
        <authorList>
            <person name="Giovannoni S.J."/>
            <person name="Tripp H.J."/>
            <person name="Givan S."/>
            <person name="Podar M."/>
            <person name="Vergin K.L."/>
            <person name="Baptista D."/>
            <person name="Bibbs L."/>
            <person name="Eads J."/>
            <person name="Richardson T.H."/>
            <person name="Noordewier M."/>
            <person name="Rappe M.S."/>
            <person name="Short J.M."/>
            <person name="Carrington J.C."/>
            <person name="Mathur E.J."/>
        </authorList>
    </citation>
    <scope>NUCLEOTIDE SEQUENCE [LARGE SCALE GENOMIC DNA]</scope>
    <source>
        <strain>HTCC1062</strain>
    </source>
</reference>
<comment type="function">
    <text evidence="1">Involved in the biosynthesis of the chorismate, which leads to the biosynthesis of aromatic amino acids. Catalyzes the reversible NADPH linked reduction of 3-dehydroshikimate (DHSA) to yield shikimate (SA).</text>
</comment>
<comment type="catalytic activity">
    <reaction evidence="1">
        <text>shikimate + NADP(+) = 3-dehydroshikimate + NADPH + H(+)</text>
        <dbReference type="Rhea" id="RHEA:17737"/>
        <dbReference type="ChEBI" id="CHEBI:15378"/>
        <dbReference type="ChEBI" id="CHEBI:16630"/>
        <dbReference type="ChEBI" id="CHEBI:36208"/>
        <dbReference type="ChEBI" id="CHEBI:57783"/>
        <dbReference type="ChEBI" id="CHEBI:58349"/>
        <dbReference type="EC" id="1.1.1.25"/>
    </reaction>
</comment>
<comment type="pathway">
    <text evidence="1">Metabolic intermediate biosynthesis; chorismate biosynthesis; chorismate from D-erythrose 4-phosphate and phosphoenolpyruvate: step 4/7.</text>
</comment>
<comment type="subunit">
    <text evidence="1">Homodimer.</text>
</comment>
<comment type="similarity">
    <text evidence="1">Belongs to the shikimate dehydrogenase family.</text>
</comment>
<feature type="chain" id="PRO_0000325143" description="Shikimate dehydrogenase (NADP(+))">
    <location>
        <begin position="1"/>
        <end position="265"/>
    </location>
</feature>
<feature type="active site" description="Proton acceptor" evidence="1">
    <location>
        <position position="66"/>
    </location>
</feature>
<feature type="binding site" evidence="1">
    <location>
        <begin position="15"/>
        <end position="17"/>
    </location>
    <ligand>
        <name>shikimate</name>
        <dbReference type="ChEBI" id="CHEBI:36208"/>
    </ligand>
</feature>
<feature type="binding site" evidence="1">
    <location>
        <position position="62"/>
    </location>
    <ligand>
        <name>shikimate</name>
        <dbReference type="ChEBI" id="CHEBI:36208"/>
    </ligand>
</feature>
<feature type="binding site" evidence="1">
    <location>
        <position position="78"/>
    </location>
    <ligand>
        <name>NADP(+)</name>
        <dbReference type="ChEBI" id="CHEBI:58349"/>
    </ligand>
</feature>
<feature type="binding site" evidence="1">
    <location>
        <position position="87"/>
    </location>
    <ligand>
        <name>shikimate</name>
        <dbReference type="ChEBI" id="CHEBI:36208"/>
    </ligand>
</feature>
<feature type="binding site" evidence="1">
    <location>
        <position position="102"/>
    </location>
    <ligand>
        <name>shikimate</name>
        <dbReference type="ChEBI" id="CHEBI:36208"/>
    </ligand>
</feature>
<feature type="binding site" evidence="1">
    <location>
        <begin position="126"/>
        <end position="130"/>
    </location>
    <ligand>
        <name>NADP(+)</name>
        <dbReference type="ChEBI" id="CHEBI:58349"/>
    </ligand>
</feature>
<feature type="binding site" evidence="1">
    <location>
        <begin position="150"/>
        <end position="155"/>
    </location>
    <ligand>
        <name>NADP(+)</name>
        <dbReference type="ChEBI" id="CHEBI:58349"/>
    </ligand>
</feature>
<feature type="binding site" evidence="1">
    <location>
        <position position="210"/>
    </location>
    <ligand>
        <name>NADP(+)</name>
        <dbReference type="ChEBI" id="CHEBI:58349"/>
    </ligand>
</feature>
<feature type="binding site" evidence="1">
    <location>
        <position position="212"/>
    </location>
    <ligand>
        <name>shikimate</name>
        <dbReference type="ChEBI" id="CHEBI:36208"/>
    </ligand>
</feature>
<feature type="binding site" evidence="1">
    <location>
        <position position="233"/>
    </location>
    <ligand>
        <name>NADP(+)</name>
        <dbReference type="ChEBI" id="CHEBI:58349"/>
    </ligand>
</feature>
<protein>
    <recommendedName>
        <fullName evidence="1">Shikimate dehydrogenase (NADP(+))</fullName>
        <shortName evidence="1">SDH</shortName>
        <ecNumber evidence="1">1.1.1.25</ecNumber>
    </recommendedName>
</protein>
<organism>
    <name type="scientific">Pelagibacter ubique (strain HTCC1062)</name>
    <dbReference type="NCBI Taxonomy" id="335992"/>
    <lineage>
        <taxon>Bacteria</taxon>
        <taxon>Pseudomonadati</taxon>
        <taxon>Pseudomonadota</taxon>
        <taxon>Alphaproteobacteria</taxon>
        <taxon>Candidatus Pelagibacterales</taxon>
        <taxon>Candidatus Pelagibacteraceae</taxon>
        <taxon>Candidatus Pelagibacter</taxon>
    </lineage>
</organism>
<name>AROE_PELUB</name>
<gene>
    <name evidence="1" type="primary">aroE</name>
    <name type="ordered locus">SAR11_0341</name>
</gene>